<reference key="1">
    <citation type="submission" date="1999-07" db="EMBL/GenBank/DDBJ databases">
        <authorList>
            <person name="Tsyba L.O."/>
            <person name="Kvasha S.M."/>
            <person name="Skripkina I.Y."/>
            <person name="Anoprienko O.V."/>
            <person name="Slavov D."/>
            <person name="Tassone F."/>
            <person name="Rynditch A.V."/>
            <person name="Gardiner K."/>
        </authorList>
    </citation>
    <scope>NUCLEOTIDE SEQUENCE [MRNA]</scope>
</reference>
<reference key="2">
    <citation type="journal article" date="2006" name="Exp. Cell Res.">
        <title>The arginine methyltransferase PRMT2 binds RB and regulates E2F function.</title>
        <authorList>
            <person name="Yoshimoto T."/>
            <person name="Boehm M."/>
            <person name="Olive M."/>
            <person name="Crook M.F."/>
            <person name="San H."/>
            <person name="Langenickel T."/>
            <person name="Nabel E.G."/>
        </authorList>
    </citation>
    <scope>FUNCTION</scope>
    <scope>INTERACTION WITH RB1 AND E2F1</scope>
    <scope>TISSUE SPECIFICITY</scope>
</reference>
<reference key="3">
    <citation type="journal article" date="2006" name="Mol. Cell. Biol.">
        <title>Protein methyltransferase 2 inhibits NF-kappaB function and promotes apoptosis.</title>
        <authorList>
            <person name="Ganesh L."/>
            <person name="Yoshimoto T."/>
            <person name="Moorthy N.C."/>
            <person name="Akahata W."/>
            <person name="Boehm M."/>
            <person name="Nabel E.G."/>
            <person name="Nabel G.J."/>
        </authorList>
    </citation>
    <scope>FUNCTION</scope>
    <scope>DISRUPTION PHENOTYPE</scope>
</reference>
<reference key="4">
    <citation type="journal article" date="2010" name="Circ. Res.">
        <title>Disruption of protein arginine N-methyltransferase 2 regulates leptin signaling and produces leanness in vivo through loss of STAT3 methylation.</title>
        <authorList>
            <person name="Iwasaki H."/>
            <person name="Kovacic J.C."/>
            <person name="Olive M."/>
            <person name="Beers J.K."/>
            <person name="Yoshimoto T."/>
            <person name="Crook M.F."/>
            <person name="Tonelli L.H."/>
            <person name="Nabel E.G."/>
        </authorList>
    </citation>
    <scope>FUNCTION</scope>
    <scope>DISRUPTION PHENOTYPE</scope>
</reference>
<reference key="5">
    <citation type="journal article" date="2010" name="Dev. Cell">
        <title>beta-Catenin primes organizer gene expression by recruiting a histone H3 arginine 8 methyltransferase, Prmt2.</title>
        <authorList>
            <person name="Blythe S.A."/>
            <person name="Cha S.-W."/>
            <person name="Tadjuidje E."/>
            <person name="Heasman J."/>
            <person name="Klein P.S."/>
        </authorList>
    </citation>
    <scope>FUNCTION</scope>
</reference>
<keyword id="KW-0963">Cytoplasm</keyword>
<keyword id="KW-0488">Methylation</keyword>
<keyword id="KW-0489">Methyltransferase</keyword>
<keyword id="KW-0539">Nucleus</keyword>
<keyword id="KW-1185">Reference proteome</keyword>
<keyword id="KW-0949">S-adenosyl-L-methionine</keyword>
<keyword id="KW-0728">SH3 domain</keyword>
<keyword id="KW-0808">Transferase</keyword>
<gene>
    <name type="primary">Prmt2</name>
    <name type="synonym">Hrmt1l1</name>
</gene>
<feature type="chain" id="PRO_0000212325" description="Protein arginine N-methyltransferase 2">
    <location>
        <begin position="1"/>
        <end position="448"/>
    </location>
</feature>
<feature type="domain" description="SH3" evidence="3">
    <location>
        <begin position="42"/>
        <end position="101"/>
    </location>
</feature>
<feature type="domain" description="SAM-dependent MTase PRMT-type" evidence="4">
    <location>
        <begin position="111"/>
        <end position="414"/>
    </location>
</feature>
<feature type="region of interest" description="Interaction with ESR1" evidence="1">
    <location>
        <begin position="1"/>
        <end position="289"/>
    </location>
</feature>
<feature type="region of interest" description="Interaction with RB1" evidence="5">
    <location>
        <begin position="95"/>
        <end position="219"/>
    </location>
</feature>
<feature type="region of interest" description="Interaction with ESR1" evidence="1">
    <location>
        <begin position="145"/>
        <end position="287"/>
    </location>
</feature>
<feature type="active site" evidence="1">
    <location>
        <position position="223"/>
    </location>
</feature>
<feature type="active site" evidence="1">
    <location>
        <position position="232"/>
    </location>
</feature>
<feature type="binding site" evidence="1">
    <location>
        <position position="124"/>
    </location>
    <ligand>
        <name>S-adenosyl-L-methionine</name>
        <dbReference type="ChEBI" id="CHEBI:59789"/>
    </ligand>
</feature>
<feature type="binding site" evidence="1">
    <location>
        <position position="133"/>
    </location>
    <ligand>
        <name>S-adenosyl-L-methionine</name>
        <dbReference type="ChEBI" id="CHEBI:59789"/>
    </ligand>
</feature>
<feature type="binding site" evidence="1">
    <location>
        <position position="157"/>
    </location>
    <ligand>
        <name>S-adenosyl-L-methionine</name>
        <dbReference type="ChEBI" id="CHEBI:59789"/>
    </ligand>
</feature>
<feature type="binding site" evidence="1">
    <location>
        <position position="180"/>
    </location>
    <ligand>
        <name>S-adenosyl-L-methionine</name>
        <dbReference type="ChEBI" id="CHEBI:59789"/>
    </ligand>
</feature>
<feature type="binding site" evidence="1">
    <location>
        <position position="209"/>
    </location>
    <ligand>
        <name>S-adenosyl-L-methionine</name>
        <dbReference type="ChEBI" id="CHEBI:59789"/>
    </ligand>
</feature>
<feature type="modified residue" description="Asymmetric dimethylarginine" evidence="2">
    <location>
        <position position="73"/>
    </location>
</feature>
<feature type="modified residue" description="Asymmetric dimethylarginine" evidence="2">
    <location>
        <position position="84"/>
    </location>
</feature>
<accession>Q9R144</accession>
<name>ANM2_MOUSE</name>
<organism>
    <name type="scientific">Mus musculus</name>
    <name type="common">Mouse</name>
    <dbReference type="NCBI Taxonomy" id="10090"/>
    <lineage>
        <taxon>Eukaryota</taxon>
        <taxon>Metazoa</taxon>
        <taxon>Chordata</taxon>
        <taxon>Craniata</taxon>
        <taxon>Vertebrata</taxon>
        <taxon>Euteleostomi</taxon>
        <taxon>Mammalia</taxon>
        <taxon>Eutheria</taxon>
        <taxon>Euarchontoglires</taxon>
        <taxon>Glires</taxon>
        <taxon>Rodentia</taxon>
        <taxon>Myomorpha</taxon>
        <taxon>Muroidea</taxon>
        <taxon>Muridae</taxon>
        <taxon>Murinae</taxon>
        <taxon>Mus</taxon>
        <taxon>Mus</taxon>
    </lineage>
</organism>
<comment type="function">
    <text evidence="5 6 7 8">Arginine methyltransferase that methylates the guanidino nitrogens of arginyl residues in proteins such as STAT3, FBL, histone H4. May inhibit NF-kappa-B transcription, and promote apoptosis. Represses E2F1 transcriptional activity (in a RB1-dependent manner). Has a negative regulation effect on G1 to S transition of mitotic cell cycle. Involved in growth regulation. Acts as a coactivator (with NCOA2) of the androgen receptor (AR)-mediated transactivation. Acts as a coactivator (with estrogen) of estrogen receptor (ER)-mediated transactivation. Enhances PGR, PPARG, RARA-mediated transactivation.</text>
</comment>
<comment type="catalytic activity">
    <reaction evidence="2">
        <text>L-arginyl-[protein] + 2 S-adenosyl-L-methionine = N(omega),N(omega)-dimethyl-L-arginyl-[protein] + 2 S-adenosyl-L-homocysteine + 2 H(+)</text>
        <dbReference type="Rhea" id="RHEA:48096"/>
        <dbReference type="Rhea" id="RHEA-COMP:10532"/>
        <dbReference type="Rhea" id="RHEA-COMP:11991"/>
        <dbReference type="ChEBI" id="CHEBI:15378"/>
        <dbReference type="ChEBI" id="CHEBI:29965"/>
        <dbReference type="ChEBI" id="CHEBI:57856"/>
        <dbReference type="ChEBI" id="CHEBI:59789"/>
        <dbReference type="ChEBI" id="CHEBI:61897"/>
        <dbReference type="EC" id="2.1.1.319"/>
    </reaction>
</comment>
<comment type="subunit">
    <text evidence="1 5">Self-associates (By similarity). Interacts with HNRNPUL1. Interacts with NFKBIA (By similarity). Interacts with NCOA6 coactivator. Interacts (via SH3 domain) with PRMT8. Interacts with AR. Interacts with ESR1, ESR2, PGR, PPARG, RARA, RXRA and THRB (By similarity). Interacts with RB1 and E2F1.</text>
</comment>
<comment type="subcellular location">
    <subcellularLocation>
        <location evidence="1">Cytoplasm</location>
    </subcellularLocation>
    <subcellularLocation>
        <location evidence="1">Nucleus</location>
    </subcellularLocation>
    <text evidence="1">Translocates from the cytoplasm to the nucleus, after hormone exposure.</text>
</comment>
<comment type="tissue specificity">
    <text evidence="5">Expressed in liver, pancreas, lung, brain, skeletal muscle, heart, muscle and fat.</text>
</comment>
<comment type="disruption phenotype">
    <text evidence="6 8">From 6 to 30 weeks of age, males gain less weight than age-matched control wild-type mice when weaned onto a chow diet. By 30 weeks of age, females are also lean compared with wild-type females. At 12 weeks of age, male and female are 3% to 4% shorter than wild-type controls. Shows less hepatic cytoplasmic vacuoles, more distinct hepatic cords and sinusoids and increased leptin sensitivity.</text>
</comment>
<comment type="similarity">
    <text evidence="4">Belongs to the class I-like SAM-binding methyltransferase superfamily. Protein arginine N-methyltransferase family.</text>
</comment>
<sequence length="448" mass="50476">MEAPGEGPCSESQVIPVLEEDPVDYGCEMQLLQDGAQLQLQLQPEEFVAIADYTATDETQLSFLRGEKILILRQTTADWWWGERAGCCGYIPANHLGKQLEEYDPEDTWQDEEYFDSYGTLKLHLEMLADQPRTTKYHSVILQNKESLKDKVILDVGCGTGIISLFCAHHARPKAVYAVEASDMAQHTSQLVLQNGFADTITVFQQKVEDVVLPEKVDVLVSEWMGTCLLFEFMIESILYARDTWLKGDGIIWPTTAALHLVPCSAEKDYHSKVLFWDNAYEFNLSALKSLAIKEFFSRPKSNHILKPEDCLSEPCTILQLDMRTVQVPDLETMRGELRFDIQKAGTLHGFTAWFSVYFQSLEEGQPQQVVSTGPLHPTTHWKQTLFMMDDPVPVHTGDVVHGFCCVTKKSGMEKAHVCLSELGCHVRTRSHVSTELETGSFRSGGDS</sequence>
<evidence type="ECO:0000250" key="1"/>
<evidence type="ECO:0000250" key="2">
    <source>
        <dbReference type="UniProtKB" id="P55345"/>
    </source>
</evidence>
<evidence type="ECO:0000255" key="3">
    <source>
        <dbReference type="PROSITE-ProRule" id="PRU00192"/>
    </source>
</evidence>
<evidence type="ECO:0000255" key="4">
    <source>
        <dbReference type="PROSITE-ProRule" id="PRU01015"/>
    </source>
</evidence>
<evidence type="ECO:0000269" key="5">
    <source>
    </source>
</evidence>
<evidence type="ECO:0000269" key="6">
    <source>
    </source>
</evidence>
<evidence type="ECO:0000269" key="7">
    <source>
    </source>
</evidence>
<evidence type="ECO:0000269" key="8">
    <source>
    </source>
</evidence>
<dbReference type="EC" id="2.1.1.319" evidence="2"/>
<dbReference type="EMBL" id="AF169620">
    <property type="protein sequence ID" value="AAD48847.1"/>
    <property type="molecule type" value="mRNA"/>
</dbReference>
<dbReference type="SMR" id="Q9R144"/>
<dbReference type="FunCoup" id="Q9R144">
    <property type="interactions" value="1915"/>
</dbReference>
<dbReference type="IntAct" id="Q9R144">
    <property type="interactions" value="1"/>
</dbReference>
<dbReference type="STRING" id="10090.ENSMUSP00000097167"/>
<dbReference type="iPTMnet" id="Q9R144"/>
<dbReference type="PhosphoSitePlus" id="Q9R144"/>
<dbReference type="PaxDb" id="10090-ENSMUSP00000097167"/>
<dbReference type="ProteomicsDB" id="296251"/>
<dbReference type="AGR" id="MGI:1316652"/>
<dbReference type="MGI" id="MGI:1316652">
    <property type="gene designation" value="Prmt2"/>
</dbReference>
<dbReference type="InParanoid" id="Q9R144"/>
<dbReference type="PhylomeDB" id="Q9R144"/>
<dbReference type="BRENDA" id="2.1.1.319">
    <property type="organism ID" value="3474"/>
</dbReference>
<dbReference type="ChiTaRS" id="Prmt2">
    <property type="organism name" value="mouse"/>
</dbReference>
<dbReference type="PRO" id="PR:Q9R144"/>
<dbReference type="Proteomes" id="UP000000589">
    <property type="component" value="Unplaced"/>
</dbReference>
<dbReference type="RNAct" id="Q9R144">
    <property type="molecule type" value="protein"/>
</dbReference>
<dbReference type="GO" id="GO:0005737">
    <property type="term" value="C:cytoplasm"/>
    <property type="evidence" value="ECO:0000250"/>
    <property type="project" value="UniProtKB"/>
</dbReference>
<dbReference type="GO" id="GO:0005829">
    <property type="term" value="C:cytosol"/>
    <property type="evidence" value="ECO:0000250"/>
    <property type="project" value="BHF-UCL"/>
</dbReference>
<dbReference type="GO" id="GO:0005634">
    <property type="term" value="C:nucleus"/>
    <property type="evidence" value="ECO:0000250"/>
    <property type="project" value="UniProtKB"/>
</dbReference>
<dbReference type="GO" id="GO:0008013">
    <property type="term" value="F:beta-catenin binding"/>
    <property type="evidence" value="ECO:0000353"/>
    <property type="project" value="UniProtKB"/>
</dbReference>
<dbReference type="GO" id="GO:0140938">
    <property type="term" value="F:histone H3 methyltransferase activity"/>
    <property type="evidence" value="ECO:0000314"/>
    <property type="project" value="UniProtKB"/>
</dbReference>
<dbReference type="GO" id="GO:0042054">
    <property type="term" value="F:histone methyltransferase activity"/>
    <property type="evidence" value="ECO:0000250"/>
    <property type="project" value="BHF-UCL"/>
</dbReference>
<dbReference type="GO" id="GO:0050681">
    <property type="term" value="F:nuclear androgen receptor binding"/>
    <property type="evidence" value="ECO:0000250"/>
    <property type="project" value="BHF-UCL"/>
</dbReference>
<dbReference type="GO" id="GO:0030331">
    <property type="term" value="F:nuclear estrogen receptor binding"/>
    <property type="evidence" value="ECO:0000250"/>
    <property type="project" value="UniProtKB"/>
</dbReference>
<dbReference type="GO" id="GO:0033142">
    <property type="term" value="F:nuclear progesterone receptor binding"/>
    <property type="evidence" value="ECO:0000250"/>
    <property type="project" value="BHF-UCL"/>
</dbReference>
<dbReference type="GO" id="GO:0042974">
    <property type="term" value="F:nuclear retinoic acid receptor binding"/>
    <property type="evidence" value="ECO:0000250"/>
    <property type="project" value="BHF-UCL"/>
</dbReference>
<dbReference type="GO" id="GO:0046966">
    <property type="term" value="F:nuclear thyroid hormone receptor binding"/>
    <property type="evidence" value="ECO:0000250"/>
    <property type="project" value="BHF-UCL"/>
</dbReference>
<dbReference type="GO" id="GO:0042975">
    <property type="term" value="F:peroxisome proliferator activated receptor binding"/>
    <property type="evidence" value="ECO:0000250"/>
    <property type="project" value="BHF-UCL"/>
</dbReference>
<dbReference type="GO" id="GO:0042803">
    <property type="term" value="F:protein homodimerization activity"/>
    <property type="evidence" value="ECO:0000250"/>
    <property type="project" value="BHF-UCL"/>
</dbReference>
<dbReference type="GO" id="GO:0016274">
    <property type="term" value="F:protein-arginine N-methyltransferase activity"/>
    <property type="evidence" value="ECO:0000315"/>
    <property type="project" value="UniProtKB"/>
</dbReference>
<dbReference type="GO" id="GO:0035242">
    <property type="term" value="F:protein-arginine omega-N asymmetric methyltransferase activity"/>
    <property type="evidence" value="ECO:0007669"/>
    <property type="project" value="UniProtKB-EC"/>
</dbReference>
<dbReference type="GO" id="GO:0044877">
    <property type="term" value="F:protein-containing complex binding"/>
    <property type="evidence" value="ECO:0000353"/>
    <property type="project" value="UniProtKB"/>
</dbReference>
<dbReference type="GO" id="GO:0097696">
    <property type="term" value="P:cell surface receptor signaling pathway via STAT"/>
    <property type="evidence" value="ECO:0000303"/>
    <property type="project" value="BHF-UCL"/>
</dbReference>
<dbReference type="GO" id="GO:0048588">
    <property type="term" value="P:developmental cell growth"/>
    <property type="evidence" value="ECO:0000315"/>
    <property type="project" value="UniProtKB"/>
</dbReference>
<dbReference type="GO" id="GO:0033210">
    <property type="term" value="P:leptin-mediated signaling pathway"/>
    <property type="evidence" value="ECO:0000303"/>
    <property type="project" value="BHF-UCL"/>
</dbReference>
<dbReference type="GO" id="GO:0032259">
    <property type="term" value="P:methylation"/>
    <property type="evidence" value="ECO:0000303"/>
    <property type="project" value="BHF-UCL"/>
</dbReference>
<dbReference type="GO" id="GO:0043433">
    <property type="term" value="P:negative regulation of DNA-binding transcription factor activity"/>
    <property type="evidence" value="ECO:0000315"/>
    <property type="project" value="UniProtKB"/>
</dbReference>
<dbReference type="GO" id="GO:0045892">
    <property type="term" value="P:negative regulation of DNA-templated transcription"/>
    <property type="evidence" value="ECO:0000314"/>
    <property type="project" value="UniProtKB"/>
</dbReference>
<dbReference type="GO" id="GO:2000134">
    <property type="term" value="P:negative regulation of G1/S transition of mitotic cell cycle"/>
    <property type="evidence" value="ECO:0000315"/>
    <property type="project" value="UniProtKB"/>
</dbReference>
<dbReference type="GO" id="GO:0043065">
    <property type="term" value="P:positive regulation of apoptotic process"/>
    <property type="evidence" value="ECO:0000250"/>
    <property type="project" value="UniProtKB"/>
</dbReference>
<dbReference type="GO" id="GO:0045893">
    <property type="term" value="P:positive regulation of DNA-templated transcription"/>
    <property type="evidence" value="ECO:0000250"/>
    <property type="project" value="UniProtKB"/>
</dbReference>
<dbReference type="GO" id="GO:0060765">
    <property type="term" value="P:regulation of androgen receptor signaling pathway"/>
    <property type="evidence" value="ECO:0000250"/>
    <property type="project" value="UniProtKB"/>
</dbReference>
<dbReference type="GO" id="GO:0001666">
    <property type="term" value="P:response to hypoxia"/>
    <property type="evidence" value="ECO:0000314"/>
    <property type="project" value="BHF-UCL"/>
</dbReference>
<dbReference type="CDD" id="cd02440">
    <property type="entry name" value="AdoMet_MTases"/>
    <property type="match status" value="1"/>
</dbReference>
<dbReference type="CDD" id="cd11806">
    <property type="entry name" value="SH3_PRMT2"/>
    <property type="match status" value="1"/>
</dbReference>
<dbReference type="FunFam" id="2.70.160.11:FF:000007">
    <property type="entry name" value="Protein arginine N-methyltransferase 2"/>
    <property type="match status" value="1"/>
</dbReference>
<dbReference type="FunFam" id="3.40.50.150:FF:000016">
    <property type="entry name" value="Protein arginine N-methyltransferase 6"/>
    <property type="match status" value="1"/>
</dbReference>
<dbReference type="Gene3D" id="2.70.160.11">
    <property type="entry name" value="Hnrnp arginine n-methyltransferase1"/>
    <property type="match status" value="1"/>
</dbReference>
<dbReference type="Gene3D" id="2.30.30.40">
    <property type="entry name" value="SH3 Domains"/>
    <property type="match status" value="1"/>
</dbReference>
<dbReference type="Gene3D" id="3.40.50.150">
    <property type="entry name" value="Vaccinia Virus protein VP39"/>
    <property type="match status" value="1"/>
</dbReference>
<dbReference type="InterPro" id="IPR025799">
    <property type="entry name" value="Arg_MeTrfase"/>
</dbReference>
<dbReference type="InterPro" id="IPR055135">
    <property type="entry name" value="PRMT_dom"/>
</dbReference>
<dbReference type="InterPro" id="IPR029063">
    <property type="entry name" value="SAM-dependent_MTases_sf"/>
</dbReference>
<dbReference type="InterPro" id="IPR036028">
    <property type="entry name" value="SH3-like_dom_sf"/>
</dbReference>
<dbReference type="InterPro" id="IPR001452">
    <property type="entry name" value="SH3_domain"/>
</dbReference>
<dbReference type="InterPro" id="IPR007848">
    <property type="entry name" value="Small_mtfrase_dom"/>
</dbReference>
<dbReference type="PANTHER" id="PTHR11006">
    <property type="entry name" value="PROTEIN ARGININE N-METHYLTRANSFERASE"/>
    <property type="match status" value="1"/>
</dbReference>
<dbReference type="PANTHER" id="PTHR11006:SF92">
    <property type="entry name" value="PROTEIN ARGININE N-METHYLTRANSFERASE 2"/>
    <property type="match status" value="1"/>
</dbReference>
<dbReference type="Pfam" id="PF05175">
    <property type="entry name" value="MTS"/>
    <property type="match status" value="1"/>
</dbReference>
<dbReference type="Pfam" id="PF22528">
    <property type="entry name" value="PRMT_C"/>
    <property type="match status" value="1"/>
</dbReference>
<dbReference type="Pfam" id="PF00018">
    <property type="entry name" value="SH3_1"/>
    <property type="match status" value="1"/>
</dbReference>
<dbReference type="PRINTS" id="PR00452">
    <property type="entry name" value="SH3DOMAIN"/>
</dbReference>
<dbReference type="SMART" id="SM00326">
    <property type="entry name" value="SH3"/>
    <property type="match status" value="1"/>
</dbReference>
<dbReference type="SUPFAM" id="SSF53335">
    <property type="entry name" value="S-adenosyl-L-methionine-dependent methyltransferases"/>
    <property type="match status" value="1"/>
</dbReference>
<dbReference type="SUPFAM" id="SSF50044">
    <property type="entry name" value="SH3-domain"/>
    <property type="match status" value="1"/>
</dbReference>
<dbReference type="PROSITE" id="PS51678">
    <property type="entry name" value="SAM_MT_PRMT"/>
    <property type="match status" value="1"/>
</dbReference>
<dbReference type="PROSITE" id="PS50002">
    <property type="entry name" value="SH3"/>
    <property type="match status" value="1"/>
</dbReference>
<proteinExistence type="evidence at protein level"/>
<protein>
    <recommendedName>
        <fullName>Protein arginine N-methyltransferase 2</fullName>
        <ecNumber evidence="2">2.1.1.319</ecNumber>
    </recommendedName>
    <alternativeName>
        <fullName>Histone-arginine N-methyltransferase PRMT2</fullName>
    </alternativeName>
</protein>